<feature type="chain" id="PRO_0000305809" description="Bifunctional protein FolD">
    <location>
        <begin position="1"/>
        <end position="285"/>
    </location>
</feature>
<feature type="binding site" evidence="1">
    <location>
        <begin position="165"/>
        <end position="167"/>
    </location>
    <ligand>
        <name>NADP(+)</name>
        <dbReference type="ChEBI" id="CHEBI:58349"/>
    </ligand>
</feature>
<feature type="binding site" evidence="1">
    <location>
        <position position="190"/>
    </location>
    <ligand>
        <name>NADP(+)</name>
        <dbReference type="ChEBI" id="CHEBI:58349"/>
    </ligand>
</feature>
<feature type="binding site" evidence="1">
    <location>
        <position position="231"/>
    </location>
    <ligand>
        <name>NADP(+)</name>
        <dbReference type="ChEBI" id="CHEBI:58349"/>
    </ligand>
</feature>
<keyword id="KW-0028">Amino-acid biosynthesis</keyword>
<keyword id="KW-0368">Histidine biosynthesis</keyword>
<keyword id="KW-0378">Hydrolase</keyword>
<keyword id="KW-0486">Methionine biosynthesis</keyword>
<keyword id="KW-0511">Multifunctional enzyme</keyword>
<keyword id="KW-0521">NADP</keyword>
<keyword id="KW-0554">One-carbon metabolism</keyword>
<keyword id="KW-0560">Oxidoreductase</keyword>
<keyword id="KW-0658">Purine biosynthesis</keyword>
<keyword id="KW-1185">Reference proteome</keyword>
<proteinExistence type="inferred from homology"/>
<sequence length="285" mass="30787">MEAKVLNGKELSTKIKEELKIEVEDLKKNNINPGLAVIIVGNDPASRVYVNSKKKACAEIGIESFEYALEENTTQEELIELIHKLNKDDKVSGILVQLPLPKHIDEEKVIYAIDPSKDVDAFHPVNVGKLMIGNPDFLPCTPAGVMELIKESGIDITGKECVVVGRSNIVGKPMAMLLLAQNGTVTVCHSRTQNIDEVCKRADILVVAVGKPEFIKGSSIKPGAVVIDVGINRLENKKLVGDVEYESASRVASAITPVPGGVGPMTIAMLMKNTVKAAKLQAKMK</sequence>
<accession>A3DEE6</accession>
<comment type="function">
    <text evidence="1">Catalyzes the oxidation of 5,10-methylenetetrahydrofolate to 5,10-methenyltetrahydrofolate and then the hydrolysis of 5,10-methenyltetrahydrofolate to 10-formyltetrahydrofolate.</text>
</comment>
<comment type="catalytic activity">
    <reaction evidence="1">
        <text>(6R)-5,10-methylene-5,6,7,8-tetrahydrofolate + NADP(+) = (6R)-5,10-methenyltetrahydrofolate + NADPH</text>
        <dbReference type="Rhea" id="RHEA:22812"/>
        <dbReference type="ChEBI" id="CHEBI:15636"/>
        <dbReference type="ChEBI" id="CHEBI:57455"/>
        <dbReference type="ChEBI" id="CHEBI:57783"/>
        <dbReference type="ChEBI" id="CHEBI:58349"/>
        <dbReference type="EC" id="1.5.1.5"/>
    </reaction>
</comment>
<comment type="catalytic activity">
    <reaction evidence="1">
        <text>(6R)-5,10-methenyltetrahydrofolate + H2O = (6R)-10-formyltetrahydrofolate + H(+)</text>
        <dbReference type="Rhea" id="RHEA:23700"/>
        <dbReference type="ChEBI" id="CHEBI:15377"/>
        <dbReference type="ChEBI" id="CHEBI:15378"/>
        <dbReference type="ChEBI" id="CHEBI:57455"/>
        <dbReference type="ChEBI" id="CHEBI:195366"/>
        <dbReference type="EC" id="3.5.4.9"/>
    </reaction>
</comment>
<comment type="pathway">
    <text evidence="1">One-carbon metabolism; tetrahydrofolate interconversion.</text>
</comment>
<comment type="subunit">
    <text evidence="1">Homodimer.</text>
</comment>
<comment type="similarity">
    <text evidence="1">Belongs to the tetrahydrofolate dehydrogenase/cyclohydrolase family.</text>
</comment>
<gene>
    <name evidence="1" type="primary">folD</name>
    <name type="ordered locus">Cthe_1093</name>
</gene>
<protein>
    <recommendedName>
        <fullName evidence="1">Bifunctional protein FolD</fullName>
    </recommendedName>
    <domain>
        <recommendedName>
            <fullName evidence="1">Methylenetetrahydrofolate dehydrogenase</fullName>
            <ecNumber evidence="1">1.5.1.5</ecNumber>
        </recommendedName>
    </domain>
    <domain>
        <recommendedName>
            <fullName evidence="1">Methenyltetrahydrofolate cyclohydrolase</fullName>
            <ecNumber evidence="1">3.5.4.9</ecNumber>
        </recommendedName>
    </domain>
</protein>
<organism>
    <name type="scientific">Acetivibrio thermocellus (strain ATCC 27405 / DSM 1237 / JCM 9322 / NBRC 103400 / NCIMB 10682 / NRRL B-4536 / VPI 7372)</name>
    <name type="common">Clostridium thermocellum</name>
    <dbReference type="NCBI Taxonomy" id="203119"/>
    <lineage>
        <taxon>Bacteria</taxon>
        <taxon>Bacillati</taxon>
        <taxon>Bacillota</taxon>
        <taxon>Clostridia</taxon>
        <taxon>Eubacteriales</taxon>
        <taxon>Oscillospiraceae</taxon>
        <taxon>Acetivibrio</taxon>
    </lineage>
</organism>
<dbReference type="EC" id="1.5.1.5" evidence="1"/>
<dbReference type="EC" id="3.5.4.9" evidence="1"/>
<dbReference type="EMBL" id="CP000568">
    <property type="protein sequence ID" value="ABN52325.1"/>
    <property type="molecule type" value="Genomic_DNA"/>
</dbReference>
<dbReference type="RefSeq" id="WP_003515736.1">
    <property type="nucleotide sequence ID" value="NC_009012.1"/>
</dbReference>
<dbReference type="SMR" id="A3DEE6"/>
<dbReference type="STRING" id="203119.Cthe_1093"/>
<dbReference type="GeneID" id="35804655"/>
<dbReference type="KEGG" id="cth:Cthe_1093"/>
<dbReference type="eggNOG" id="COG0190">
    <property type="taxonomic scope" value="Bacteria"/>
</dbReference>
<dbReference type="HOGENOM" id="CLU_034045_2_1_9"/>
<dbReference type="OrthoDB" id="9803580at2"/>
<dbReference type="UniPathway" id="UPA00193"/>
<dbReference type="Proteomes" id="UP000002145">
    <property type="component" value="Chromosome"/>
</dbReference>
<dbReference type="GO" id="GO:0005829">
    <property type="term" value="C:cytosol"/>
    <property type="evidence" value="ECO:0007669"/>
    <property type="project" value="TreeGrafter"/>
</dbReference>
<dbReference type="GO" id="GO:0004477">
    <property type="term" value="F:methenyltetrahydrofolate cyclohydrolase activity"/>
    <property type="evidence" value="ECO:0007669"/>
    <property type="project" value="UniProtKB-UniRule"/>
</dbReference>
<dbReference type="GO" id="GO:0004488">
    <property type="term" value="F:methylenetetrahydrofolate dehydrogenase (NADP+) activity"/>
    <property type="evidence" value="ECO:0007669"/>
    <property type="project" value="UniProtKB-UniRule"/>
</dbReference>
<dbReference type="GO" id="GO:0000105">
    <property type="term" value="P:L-histidine biosynthetic process"/>
    <property type="evidence" value="ECO:0007669"/>
    <property type="project" value="UniProtKB-KW"/>
</dbReference>
<dbReference type="GO" id="GO:0009086">
    <property type="term" value="P:methionine biosynthetic process"/>
    <property type="evidence" value="ECO:0007669"/>
    <property type="project" value="UniProtKB-KW"/>
</dbReference>
<dbReference type="GO" id="GO:0006164">
    <property type="term" value="P:purine nucleotide biosynthetic process"/>
    <property type="evidence" value="ECO:0007669"/>
    <property type="project" value="UniProtKB-KW"/>
</dbReference>
<dbReference type="GO" id="GO:0035999">
    <property type="term" value="P:tetrahydrofolate interconversion"/>
    <property type="evidence" value="ECO:0007669"/>
    <property type="project" value="UniProtKB-UniRule"/>
</dbReference>
<dbReference type="CDD" id="cd01080">
    <property type="entry name" value="NAD_bind_m-THF_DH_Cyclohyd"/>
    <property type="match status" value="1"/>
</dbReference>
<dbReference type="FunFam" id="3.40.50.10860:FF:000001">
    <property type="entry name" value="Bifunctional protein FolD"/>
    <property type="match status" value="1"/>
</dbReference>
<dbReference type="FunFam" id="3.40.50.720:FF:000006">
    <property type="entry name" value="Bifunctional protein FolD"/>
    <property type="match status" value="1"/>
</dbReference>
<dbReference type="Gene3D" id="3.40.50.10860">
    <property type="entry name" value="Leucine Dehydrogenase, chain A, domain 1"/>
    <property type="match status" value="1"/>
</dbReference>
<dbReference type="Gene3D" id="3.40.50.720">
    <property type="entry name" value="NAD(P)-binding Rossmann-like Domain"/>
    <property type="match status" value="1"/>
</dbReference>
<dbReference type="HAMAP" id="MF_01576">
    <property type="entry name" value="THF_DHG_CYH"/>
    <property type="match status" value="1"/>
</dbReference>
<dbReference type="InterPro" id="IPR046346">
    <property type="entry name" value="Aminoacid_DH-like_N_sf"/>
</dbReference>
<dbReference type="InterPro" id="IPR036291">
    <property type="entry name" value="NAD(P)-bd_dom_sf"/>
</dbReference>
<dbReference type="InterPro" id="IPR000672">
    <property type="entry name" value="THF_DH/CycHdrlase"/>
</dbReference>
<dbReference type="InterPro" id="IPR020630">
    <property type="entry name" value="THF_DH/CycHdrlase_cat_dom"/>
</dbReference>
<dbReference type="InterPro" id="IPR020867">
    <property type="entry name" value="THF_DH/CycHdrlase_CS"/>
</dbReference>
<dbReference type="InterPro" id="IPR020631">
    <property type="entry name" value="THF_DH/CycHdrlase_NAD-bd_dom"/>
</dbReference>
<dbReference type="NCBIfam" id="NF008058">
    <property type="entry name" value="PRK10792.1"/>
    <property type="match status" value="1"/>
</dbReference>
<dbReference type="NCBIfam" id="NF010783">
    <property type="entry name" value="PRK14186.1"/>
    <property type="match status" value="1"/>
</dbReference>
<dbReference type="NCBIfam" id="NF010785">
    <property type="entry name" value="PRK14188.1"/>
    <property type="match status" value="1"/>
</dbReference>
<dbReference type="PANTHER" id="PTHR48099:SF5">
    <property type="entry name" value="C-1-TETRAHYDROFOLATE SYNTHASE, CYTOPLASMIC"/>
    <property type="match status" value="1"/>
</dbReference>
<dbReference type="PANTHER" id="PTHR48099">
    <property type="entry name" value="C-1-TETRAHYDROFOLATE SYNTHASE, CYTOPLASMIC-RELATED"/>
    <property type="match status" value="1"/>
</dbReference>
<dbReference type="Pfam" id="PF00763">
    <property type="entry name" value="THF_DHG_CYH"/>
    <property type="match status" value="1"/>
</dbReference>
<dbReference type="Pfam" id="PF02882">
    <property type="entry name" value="THF_DHG_CYH_C"/>
    <property type="match status" value="1"/>
</dbReference>
<dbReference type="PRINTS" id="PR00085">
    <property type="entry name" value="THFDHDRGNASE"/>
</dbReference>
<dbReference type="SUPFAM" id="SSF53223">
    <property type="entry name" value="Aminoacid dehydrogenase-like, N-terminal domain"/>
    <property type="match status" value="1"/>
</dbReference>
<dbReference type="SUPFAM" id="SSF51735">
    <property type="entry name" value="NAD(P)-binding Rossmann-fold domains"/>
    <property type="match status" value="1"/>
</dbReference>
<dbReference type="PROSITE" id="PS00766">
    <property type="entry name" value="THF_DHG_CYH_1"/>
    <property type="match status" value="1"/>
</dbReference>
<dbReference type="PROSITE" id="PS00767">
    <property type="entry name" value="THF_DHG_CYH_2"/>
    <property type="match status" value="1"/>
</dbReference>
<evidence type="ECO:0000255" key="1">
    <source>
        <dbReference type="HAMAP-Rule" id="MF_01576"/>
    </source>
</evidence>
<reference key="1">
    <citation type="submission" date="2007-02" db="EMBL/GenBank/DDBJ databases">
        <title>Complete sequence of Clostridium thermocellum ATCC 27405.</title>
        <authorList>
            <consortium name="US DOE Joint Genome Institute"/>
            <person name="Copeland A."/>
            <person name="Lucas S."/>
            <person name="Lapidus A."/>
            <person name="Barry K."/>
            <person name="Detter J.C."/>
            <person name="Glavina del Rio T."/>
            <person name="Hammon N."/>
            <person name="Israni S."/>
            <person name="Dalin E."/>
            <person name="Tice H."/>
            <person name="Pitluck S."/>
            <person name="Chertkov O."/>
            <person name="Brettin T."/>
            <person name="Bruce D."/>
            <person name="Han C."/>
            <person name="Tapia R."/>
            <person name="Gilna P."/>
            <person name="Schmutz J."/>
            <person name="Larimer F."/>
            <person name="Land M."/>
            <person name="Hauser L."/>
            <person name="Kyrpides N."/>
            <person name="Mikhailova N."/>
            <person name="Wu J.H.D."/>
            <person name="Newcomb M."/>
            <person name="Richardson P."/>
        </authorList>
    </citation>
    <scope>NUCLEOTIDE SEQUENCE [LARGE SCALE GENOMIC DNA]</scope>
    <source>
        <strain>ATCC 27405 / DSM 1237 / JCM 9322 / NBRC 103400 / NCIMB 10682 / NRRL B-4536 / VPI 7372</strain>
    </source>
</reference>
<name>FOLD_ACET2</name>